<reference key="1">
    <citation type="journal article" date="2006" name="Proc. Natl. Acad. Sci. U.S.A.">
        <title>Burkholderia xenovorans LB400 harbors a multi-replicon, 9.73-Mbp genome shaped for versatility.</title>
        <authorList>
            <person name="Chain P.S.G."/>
            <person name="Denef V.J."/>
            <person name="Konstantinidis K.T."/>
            <person name="Vergez L.M."/>
            <person name="Agullo L."/>
            <person name="Reyes V.L."/>
            <person name="Hauser L."/>
            <person name="Cordova M."/>
            <person name="Gomez L."/>
            <person name="Gonzalez M."/>
            <person name="Land M."/>
            <person name="Lao V."/>
            <person name="Larimer F."/>
            <person name="LiPuma J.J."/>
            <person name="Mahenthiralingam E."/>
            <person name="Malfatti S.A."/>
            <person name="Marx C.J."/>
            <person name="Parnell J.J."/>
            <person name="Ramette A."/>
            <person name="Richardson P."/>
            <person name="Seeger M."/>
            <person name="Smith D."/>
            <person name="Spilker T."/>
            <person name="Sul W.J."/>
            <person name="Tsoi T.V."/>
            <person name="Ulrich L.E."/>
            <person name="Zhulin I.B."/>
            <person name="Tiedje J.M."/>
        </authorList>
    </citation>
    <scope>NUCLEOTIDE SEQUENCE [LARGE SCALE GENOMIC DNA]</scope>
    <source>
        <strain>LB400</strain>
    </source>
</reference>
<accession>Q13LW5</accession>
<gene>
    <name evidence="1" type="primary">rhmD</name>
    <name type="ordered locus">Bxeno_B1956</name>
    <name type="ORF">Bxe_B1030</name>
</gene>
<name>RHMD_PARXL</name>
<evidence type="ECO:0000255" key="1">
    <source>
        <dbReference type="HAMAP-Rule" id="MF_01288"/>
    </source>
</evidence>
<proteinExistence type="inferred from homology"/>
<feature type="chain" id="PRO_0000351689" description="L-rhamnonate dehydratase">
    <location>
        <begin position="1"/>
        <end position="392"/>
    </location>
</feature>
<feature type="active site" description="Proton acceptor" evidence="1">
    <location>
        <position position="318"/>
    </location>
</feature>
<feature type="binding site" evidence="1">
    <location>
        <position position="22"/>
    </location>
    <ligand>
        <name>substrate</name>
    </ligand>
</feature>
<feature type="binding site" evidence="1">
    <location>
        <position position="48"/>
    </location>
    <ligand>
        <name>substrate</name>
    </ligand>
</feature>
<feature type="binding site" evidence="1">
    <location>
        <position position="214"/>
    </location>
    <ligand>
        <name>Mg(2+)</name>
        <dbReference type="ChEBI" id="CHEBI:18420"/>
    </ligand>
</feature>
<feature type="binding site" evidence="1">
    <location>
        <position position="240"/>
    </location>
    <ligand>
        <name>Mg(2+)</name>
        <dbReference type="ChEBI" id="CHEBI:18420"/>
    </ligand>
</feature>
<feature type="binding site" evidence="1">
    <location>
        <position position="268"/>
    </location>
    <ligand>
        <name>Mg(2+)</name>
        <dbReference type="ChEBI" id="CHEBI:18420"/>
    </ligand>
</feature>
<feature type="binding site" evidence="1">
    <location>
        <position position="338"/>
    </location>
    <ligand>
        <name>substrate</name>
    </ligand>
</feature>
<feature type="site" description="Increases basicity of active site His" evidence="1">
    <location>
        <position position="291"/>
    </location>
</feature>
<feature type="site" description="Transition state stabilizer" evidence="1">
    <location>
        <position position="338"/>
    </location>
</feature>
<keyword id="KW-0456">Lyase</keyword>
<keyword id="KW-0460">Magnesium</keyword>
<keyword id="KW-0479">Metal-binding</keyword>
<keyword id="KW-1185">Reference proteome</keyword>
<sequence length="392" mass="43883">MAMPTIRHVRAFIVRGGGADYHDQPGGHWIDDHISTPMARYPEYRQSRQSFGINVLGTLVVEIEASDGTVGFAVTTGGEIGAFIVEKHLARFLEGQLVTDIEKMWDQMYFSTLYYGRKGVVLNTISGVDLALWDLLAKVRKEPVYQLLGGPVRDELVFYATGARPDLAKEMGFIGGKLPLQHGPAEGDAGLRQNLDKLAEMRSRVGDDFWLMYDCWMSLDVPYATRLAQAAHEYGLKWIEECLPPDDYWGYAELRRNVPRGMMVSTGEHEATRWGFRMLLEMQCCDLIQPDVGWCGGITELIKISALADAHNVMVVPHGSSVYSYHFVVTRHNSPFAEFLMMAPKADEVVPMFTPLLLDEPVPVNGRMKVPDAPGFGVRLNPECALVRPYAR</sequence>
<dbReference type="EC" id="4.2.1.90" evidence="1"/>
<dbReference type="EMBL" id="CP000271">
    <property type="protein sequence ID" value="ABE34924.1"/>
    <property type="molecule type" value="Genomic_DNA"/>
</dbReference>
<dbReference type="RefSeq" id="WP_011492233.1">
    <property type="nucleotide sequence ID" value="NC_007952.1"/>
</dbReference>
<dbReference type="SMR" id="Q13LW5"/>
<dbReference type="STRING" id="266265.Bxe_B1030"/>
<dbReference type="KEGG" id="bxb:DR64_6351"/>
<dbReference type="KEGG" id="bxe:Bxe_B1030"/>
<dbReference type="PATRIC" id="fig|266265.5.peg.6734"/>
<dbReference type="eggNOG" id="COG4948">
    <property type="taxonomic scope" value="Bacteria"/>
</dbReference>
<dbReference type="OrthoDB" id="103536at2"/>
<dbReference type="Proteomes" id="UP000001817">
    <property type="component" value="Chromosome 2"/>
</dbReference>
<dbReference type="GO" id="GO:0050032">
    <property type="term" value="F:L-rhamnonate dehydratase activity"/>
    <property type="evidence" value="ECO:0007669"/>
    <property type="project" value="UniProtKB-UniRule"/>
</dbReference>
<dbReference type="GO" id="GO:0000287">
    <property type="term" value="F:magnesium ion binding"/>
    <property type="evidence" value="ECO:0007669"/>
    <property type="project" value="UniProtKB-UniRule"/>
</dbReference>
<dbReference type="GO" id="GO:0009063">
    <property type="term" value="P:amino acid catabolic process"/>
    <property type="evidence" value="ECO:0007669"/>
    <property type="project" value="InterPro"/>
</dbReference>
<dbReference type="GO" id="GO:0016052">
    <property type="term" value="P:carbohydrate catabolic process"/>
    <property type="evidence" value="ECO:0007669"/>
    <property type="project" value="TreeGrafter"/>
</dbReference>
<dbReference type="CDD" id="cd03327">
    <property type="entry name" value="MR_like_2"/>
    <property type="match status" value="1"/>
</dbReference>
<dbReference type="FunFam" id="3.20.20.120:FF:000005">
    <property type="entry name" value="Putative L-rhamnonate dehydratase"/>
    <property type="match status" value="1"/>
</dbReference>
<dbReference type="Gene3D" id="3.20.20.120">
    <property type="entry name" value="Enolase-like C-terminal domain"/>
    <property type="match status" value="1"/>
</dbReference>
<dbReference type="Gene3D" id="3.30.390.10">
    <property type="entry name" value="Enolase-like, N-terminal domain"/>
    <property type="match status" value="1"/>
</dbReference>
<dbReference type="HAMAP" id="MF_01288">
    <property type="entry name" value="Rhamnon_dehydrat"/>
    <property type="match status" value="1"/>
</dbReference>
<dbReference type="InterPro" id="IPR036849">
    <property type="entry name" value="Enolase-like_C_sf"/>
</dbReference>
<dbReference type="InterPro" id="IPR029017">
    <property type="entry name" value="Enolase-like_N"/>
</dbReference>
<dbReference type="InterPro" id="IPR029065">
    <property type="entry name" value="Enolase_C-like"/>
</dbReference>
<dbReference type="InterPro" id="IPR023444">
    <property type="entry name" value="L-Rhamnon_dehydrat"/>
</dbReference>
<dbReference type="InterPro" id="IPR018110">
    <property type="entry name" value="Mandel_Rmase/mucon_lact_enz_CS"/>
</dbReference>
<dbReference type="InterPro" id="IPR013342">
    <property type="entry name" value="Mandelate_racemase_C"/>
</dbReference>
<dbReference type="InterPro" id="IPR013341">
    <property type="entry name" value="Mandelate_racemase_N_dom"/>
</dbReference>
<dbReference type="InterPro" id="IPR046945">
    <property type="entry name" value="RHMD-like"/>
</dbReference>
<dbReference type="NCBIfam" id="NF011968">
    <property type="entry name" value="PRK15440.1"/>
    <property type="match status" value="1"/>
</dbReference>
<dbReference type="PANTHER" id="PTHR13794">
    <property type="entry name" value="ENOLASE SUPERFAMILY, MANDELATE RACEMASE"/>
    <property type="match status" value="1"/>
</dbReference>
<dbReference type="PANTHER" id="PTHR13794:SF58">
    <property type="entry name" value="MITOCHONDRIAL ENOLASE SUPERFAMILY MEMBER 1"/>
    <property type="match status" value="1"/>
</dbReference>
<dbReference type="Pfam" id="PF13378">
    <property type="entry name" value="MR_MLE_C"/>
    <property type="match status" value="1"/>
</dbReference>
<dbReference type="Pfam" id="PF02746">
    <property type="entry name" value="MR_MLE_N"/>
    <property type="match status" value="1"/>
</dbReference>
<dbReference type="SFLD" id="SFLDG00179">
    <property type="entry name" value="mandelate_racemase"/>
    <property type="match status" value="1"/>
</dbReference>
<dbReference type="SFLD" id="SFLDF00006">
    <property type="entry name" value="rhamnonate_dehydratase"/>
    <property type="match status" value="1"/>
</dbReference>
<dbReference type="SMART" id="SM00922">
    <property type="entry name" value="MR_MLE"/>
    <property type="match status" value="1"/>
</dbReference>
<dbReference type="SUPFAM" id="SSF51604">
    <property type="entry name" value="Enolase C-terminal domain-like"/>
    <property type="match status" value="1"/>
</dbReference>
<dbReference type="SUPFAM" id="SSF54826">
    <property type="entry name" value="Enolase N-terminal domain-like"/>
    <property type="match status" value="1"/>
</dbReference>
<dbReference type="PROSITE" id="PS00908">
    <property type="entry name" value="MR_MLE_1"/>
    <property type="match status" value="1"/>
</dbReference>
<comment type="function">
    <text evidence="1">Catalyzes the dehydration of L-rhamnonate to 2-keto-3-deoxy-L-rhamnonate (KDR).</text>
</comment>
<comment type="catalytic activity">
    <reaction evidence="1">
        <text>L-rhamnonate = 2-dehydro-3-deoxy-L-rhamnonate + H2O</text>
        <dbReference type="Rhea" id="RHEA:23080"/>
        <dbReference type="ChEBI" id="CHEBI:15377"/>
        <dbReference type="ChEBI" id="CHEBI:58118"/>
        <dbReference type="ChEBI" id="CHEBI:58371"/>
        <dbReference type="EC" id="4.2.1.90"/>
    </reaction>
</comment>
<comment type="cofactor">
    <cofactor evidence="1">
        <name>Mg(2+)</name>
        <dbReference type="ChEBI" id="CHEBI:18420"/>
    </cofactor>
    <text evidence="1">Binds 1 Mg(2+) ion per subunit.</text>
</comment>
<comment type="subunit">
    <text evidence="1">Homooctamer; tetramer of dimers.</text>
</comment>
<comment type="miscellaneous">
    <text evidence="1">Reaction proceeds via a syn dehydration.</text>
</comment>
<comment type="similarity">
    <text evidence="1">Belongs to the mandelate racemase/muconate lactonizing enzyme family. RhamD subfamily.</text>
</comment>
<protein>
    <recommendedName>
        <fullName evidence="1">L-rhamnonate dehydratase</fullName>
        <shortName evidence="1">RhamD</shortName>
        <ecNumber evidence="1">4.2.1.90</ecNumber>
    </recommendedName>
</protein>
<organism>
    <name type="scientific">Paraburkholderia xenovorans (strain LB400)</name>
    <dbReference type="NCBI Taxonomy" id="266265"/>
    <lineage>
        <taxon>Bacteria</taxon>
        <taxon>Pseudomonadati</taxon>
        <taxon>Pseudomonadota</taxon>
        <taxon>Betaproteobacteria</taxon>
        <taxon>Burkholderiales</taxon>
        <taxon>Burkholderiaceae</taxon>
        <taxon>Paraburkholderia</taxon>
    </lineage>
</organism>